<comment type="function">
    <text evidence="1">In muscle, parvalbumin is thought to be involved in relaxation after contraction. It binds two calcium ions (By similarity).</text>
</comment>
<comment type="PTM">
    <text>Acetylation of Thr-1 converts C1 to C2.</text>
</comment>
<comment type="miscellaneous">
    <text>Isoelectric points of C1 and C2 are 5.4 and 5.0, respectively.</text>
</comment>
<comment type="similarity">
    <text evidence="5">Belongs to the parvalbumin family.</text>
</comment>
<proteinExistence type="evidence at protein level"/>
<dbReference type="PIR" id="A03064">
    <property type="entry name" value="PVLA"/>
</dbReference>
<dbReference type="SMR" id="P02629"/>
<dbReference type="FunCoup" id="P02629">
    <property type="interactions" value="566"/>
</dbReference>
<dbReference type="STRING" id="7897.ENSLACP00000004606"/>
<dbReference type="iPTMnet" id="P02629"/>
<dbReference type="eggNOG" id="KOG0027">
    <property type="taxonomic scope" value="Eukaryota"/>
</dbReference>
<dbReference type="InParanoid" id="P02629"/>
<dbReference type="Proteomes" id="UP000008672">
    <property type="component" value="Unassembled WGS sequence"/>
</dbReference>
<dbReference type="GO" id="GO:0005737">
    <property type="term" value="C:cytoplasm"/>
    <property type="evidence" value="ECO:0007669"/>
    <property type="project" value="TreeGrafter"/>
</dbReference>
<dbReference type="GO" id="GO:0005509">
    <property type="term" value="F:calcium ion binding"/>
    <property type="evidence" value="ECO:0007669"/>
    <property type="project" value="InterPro"/>
</dbReference>
<dbReference type="FunFam" id="1.10.238.10:FF:000060">
    <property type="entry name" value="Parvalbumin, thymic"/>
    <property type="match status" value="1"/>
</dbReference>
<dbReference type="Gene3D" id="1.10.238.10">
    <property type="entry name" value="EF-hand"/>
    <property type="match status" value="1"/>
</dbReference>
<dbReference type="InterPro" id="IPR011992">
    <property type="entry name" value="EF-hand-dom_pair"/>
</dbReference>
<dbReference type="InterPro" id="IPR018247">
    <property type="entry name" value="EF_Hand_1_Ca_BS"/>
</dbReference>
<dbReference type="InterPro" id="IPR002048">
    <property type="entry name" value="EF_hand_dom"/>
</dbReference>
<dbReference type="InterPro" id="IPR008080">
    <property type="entry name" value="Parvalbumin"/>
</dbReference>
<dbReference type="PANTHER" id="PTHR11653">
    <property type="entry name" value="PARVALBUMIN ALPHA"/>
    <property type="match status" value="1"/>
</dbReference>
<dbReference type="PANTHER" id="PTHR11653:SF2">
    <property type="entry name" value="PARVALBUMIN ALPHA"/>
    <property type="match status" value="1"/>
</dbReference>
<dbReference type="Pfam" id="PF13499">
    <property type="entry name" value="EF-hand_7"/>
    <property type="match status" value="1"/>
</dbReference>
<dbReference type="PRINTS" id="PR01697">
    <property type="entry name" value="PARVALBUMIN"/>
</dbReference>
<dbReference type="SMART" id="SM00054">
    <property type="entry name" value="EFh"/>
    <property type="match status" value="2"/>
</dbReference>
<dbReference type="SUPFAM" id="SSF47473">
    <property type="entry name" value="EF-hand"/>
    <property type="match status" value="1"/>
</dbReference>
<dbReference type="PROSITE" id="PS00018">
    <property type="entry name" value="EF_HAND_1"/>
    <property type="match status" value="2"/>
</dbReference>
<dbReference type="PROSITE" id="PS50222">
    <property type="entry name" value="EF_HAND_2"/>
    <property type="match status" value="2"/>
</dbReference>
<reference key="1">
    <citation type="journal article" date="1978" name="Biochim. Biophys. Acta">
        <title>Parvalbumins from coelacanth muscle. II. Amino acid sequence of the two less acidic components.</title>
        <authorList>
            <person name="Pechere J.-F."/>
            <person name="Rochat H."/>
            <person name="Ferraz C."/>
        </authorList>
    </citation>
    <scope>PROTEIN SEQUENCE</scope>
    <scope>ACETYLATION AT THR-1</scope>
</reference>
<keyword id="KW-0007">Acetylation</keyword>
<keyword id="KW-0106">Calcium</keyword>
<keyword id="KW-0903">Direct protein sequencing</keyword>
<keyword id="KW-0479">Metal-binding</keyword>
<keyword id="KW-0514">Muscle protein</keyword>
<keyword id="KW-1185">Reference proteome</keyword>
<keyword id="KW-0677">Repeat</keyword>
<accession>P02629</accession>
<sequence length="111" mass="12208">TKKMSEILKAEDIDKALNTFKEAGSFDHHKFFNLVGLKGKPDDTLKEVFGILDQDKSGYIEEEELKFVLKGFAAGGRELTANETKALLKAGDQDGDDKIGVDEFTNLVKAA</sequence>
<protein>
    <recommendedName>
        <fullName>Parvalbumin alpha</fullName>
    </recommendedName>
</protein>
<feature type="chain" id="PRO_0000073596" description="Parvalbumin alpha">
    <location>
        <begin position="1"/>
        <end position="111"/>
    </location>
</feature>
<feature type="domain" description="EF-hand 1" evidence="3">
    <location>
        <begin position="40"/>
        <end position="75"/>
    </location>
</feature>
<feature type="domain" description="EF-hand 2" evidence="3">
    <location>
        <begin position="79"/>
        <end position="111"/>
    </location>
</feature>
<feature type="binding site" evidence="3">
    <location>
        <position position="53"/>
    </location>
    <ligand>
        <name>Ca(2+)</name>
        <dbReference type="ChEBI" id="CHEBI:29108"/>
        <label>1</label>
    </ligand>
</feature>
<feature type="binding site" evidence="3">
    <location>
        <position position="55"/>
    </location>
    <ligand>
        <name>Ca(2+)</name>
        <dbReference type="ChEBI" id="CHEBI:29108"/>
        <label>1</label>
    </ligand>
</feature>
<feature type="binding site" evidence="3">
    <location>
        <position position="57"/>
    </location>
    <ligand>
        <name>Ca(2+)</name>
        <dbReference type="ChEBI" id="CHEBI:29108"/>
        <label>1</label>
    </ligand>
</feature>
<feature type="binding site" evidence="3">
    <location>
        <position position="59"/>
    </location>
    <ligand>
        <name>Ca(2+)</name>
        <dbReference type="ChEBI" id="CHEBI:29108"/>
        <label>1</label>
    </ligand>
</feature>
<feature type="binding site" evidence="2">
    <location>
        <position position="61"/>
    </location>
    <ligand>
        <name>Ca(2+)</name>
        <dbReference type="ChEBI" id="CHEBI:29108"/>
        <label>1</label>
    </ligand>
</feature>
<feature type="binding site" evidence="3">
    <location>
        <position position="64"/>
    </location>
    <ligand>
        <name>Ca(2+)</name>
        <dbReference type="ChEBI" id="CHEBI:29108"/>
        <label>1</label>
    </ligand>
</feature>
<feature type="binding site" evidence="3">
    <location>
        <position position="92"/>
    </location>
    <ligand>
        <name>Ca(2+)</name>
        <dbReference type="ChEBI" id="CHEBI:29108"/>
        <label>2</label>
    </ligand>
</feature>
<feature type="binding site" evidence="3">
    <location>
        <position position="94"/>
    </location>
    <ligand>
        <name>Ca(2+)</name>
        <dbReference type="ChEBI" id="CHEBI:29108"/>
        <label>2</label>
    </ligand>
</feature>
<feature type="binding site" evidence="3">
    <location>
        <position position="96"/>
    </location>
    <ligand>
        <name>Ca(2+)</name>
        <dbReference type="ChEBI" id="CHEBI:29108"/>
        <label>2</label>
    </ligand>
</feature>
<feature type="binding site" evidence="3">
    <location>
        <position position="98"/>
    </location>
    <ligand>
        <name>Ca(2+)</name>
        <dbReference type="ChEBI" id="CHEBI:29108"/>
        <label>2</label>
    </ligand>
</feature>
<feature type="binding site" evidence="3">
    <location>
        <position position="103"/>
    </location>
    <ligand>
        <name>Ca(2+)</name>
        <dbReference type="ChEBI" id="CHEBI:29108"/>
        <label>2</label>
    </ligand>
</feature>
<feature type="modified residue" description="N-acetylthreonine; in form C2" evidence="4">
    <location>
        <position position="1"/>
    </location>
</feature>
<organism>
    <name type="scientific">Latimeria chalumnae</name>
    <name type="common">Coelacanth</name>
    <dbReference type="NCBI Taxonomy" id="7897"/>
    <lineage>
        <taxon>Eukaryota</taxon>
        <taxon>Metazoa</taxon>
        <taxon>Chordata</taxon>
        <taxon>Craniata</taxon>
        <taxon>Vertebrata</taxon>
        <taxon>Euteleostomi</taxon>
        <taxon>Coelacanthiformes</taxon>
        <taxon>Coelacanthidae</taxon>
        <taxon>Latimeria</taxon>
    </lineage>
</organism>
<evidence type="ECO:0000250" key="1"/>
<evidence type="ECO:0000250" key="2">
    <source>
        <dbReference type="UniProtKB" id="P02628"/>
    </source>
</evidence>
<evidence type="ECO:0000255" key="3">
    <source>
        <dbReference type="PROSITE-ProRule" id="PRU00448"/>
    </source>
</evidence>
<evidence type="ECO:0000269" key="4">
    <source>
    </source>
</evidence>
<evidence type="ECO:0000305" key="5"/>
<name>PRVA_LATCH</name>